<reference key="1">
    <citation type="journal article" date="2003" name="Science">
        <title>Genome of Geobacter sulfurreducens: metal reduction in subsurface environments.</title>
        <authorList>
            <person name="Methe B.A."/>
            <person name="Nelson K.E."/>
            <person name="Eisen J.A."/>
            <person name="Paulsen I.T."/>
            <person name="Nelson W.C."/>
            <person name="Heidelberg J.F."/>
            <person name="Wu D."/>
            <person name="Wu M."/>
            <person name="Ward N.L."/>
            <person name="Beanan M.J."/>
            <person name="Dodson R.J."/>
            <person name="Madupu R."/>
            <person name="Brinkac L.M."/>
            <person name="Daugherty S.C."/>
            <person name="DeBoy R.T."/>
            <person name="Durkin A.S."/>
            <person name="Gwinn M.L."/>
            <person name="Kolonay J.F."/>
            <person name="Sullivan S.A."/>
            <person name="Haft D.H."/>
            <person name="Selengut J."/>
            <person name="Davidsen T.M."/>
            <person name="Zafar N."/>
            <person name="White O."/>
            <person name="Tran B."/>
            <person name="Romero C."/>
            <person name="Forberger H.A."/>
            <person name="Weidman J.F."/>
            <person name="Khouri H.M."/>
            <person name="Feldblyum T.V."/>
            <person name="Utterback T.R."/>
            <person name="Van Aken S.E."/>
            <person name="Lovley D.R."/>
            <person name="Fraser C.M."/>
        </authorList>
    </citation>
    <scope>NUCLEOTIDE SEQUENCE [LARGE SCALE GENOMIC DNA]</scope>
    <source>
        <strain>ATCC 51573 / DSM 12127 / PCA</strain>
    </source>
</reference>
<dbReference type="EC" id="4.1.99.22" evidence="1"/>
<dbReference type="EMBL" id="AE017180">
    <property type="protein sequence ID" value="AAR36537.1"/>
    <property type="molecule type" value="Genomic_DNA"/>
</dbReference>
<dbReference type="RefSeq" id="NP_954187.1">
    <property type="nucleotide sequence ID" value="NC_002939.5"/>
</dbReference>
<dbReference type="RefSeq" id="WP_010943768.1">
    <property type="nucleotide sequence ID" value="NC_002939.5"/>
</dbReference>
<dbReference type="SMR" id="Q747W9"/>
<dbReference type="FunCoup" id="Q747W9">
    <property type="interactions" value="424"/>
</dbReference>
<dbReference type="STRING" id="243231.GSU3146"/>
<dbReference type="EnsemblBacteria" id="AAR36537">
    <property type="protein sequence ID" value="AAR36537"/>
    <property type="gene ID" value="GSU3146"/>
</dbReference>
<dbReference type="KEGG" id="gsu:GSU3146"/>
<dbReference type="PATRIC" id="fig|243231.5.peg.3172"/>
<dbReference type="eggNOG" id="COG2896">
    <property type="taxonomic scope" value="Bacteria"/>
</dbReference>
<dbReference type="HOGENOM" id="CLU_009273_0_1_7"/>
<dbReference type="InParanoid" id="Q747W9"/>
<dbReference type="OrthoDB" id="9763993at2"/>
<dbReference type="UniPathway" id="UPA00344"/>
<dbReference type="Proteomes" id="UP000000577">
    <property type="component" value="Chromosome"/>
</dbReference>
<dbReference type="GO" id="GO:0051539">
    <property type="term" value="F:4 iron, 4 sulfur cluster binding"/>
    <property type="evidence" value="ECO:0007669"/>
    <property type="project" value="UniProtKB-UniRule"/>
</dbReference>
<dbReference type="GO" id="GO:0061799">
    <property type="term" value="F:cyclic pyranopterin monophosphate synthase activity"/>
    <property type="evidence" value="ECO:0000318"/>
    <property type="project" value="GO_Central"/>
</dbReference>
<dbReference type="GO" id="GO:0061798">
    <property type="term" value="F:GTP 3',8'-cyclase activity"/>
    <property type="evidence" value="ECO:0000318"/>
    <property type="project" value="GO_Central"/>
</dbReference>
<dbReference type="GO" id="GO:0005525">
    <property type="term" value="F:GTP binding"/>
    <property type="evidence" value="ECO:0007669"/>
    <property type="project" value="UniProtKB-UniRule"/>
</dbReference>
<dbReference type="GO" id="GO:0046872">
    <property type="term" value="F:metal ion binding"/>
    <property type="evidence" value="ECO:0007669"/>
    <property type="project" value="UniProtKB-KW"/>
</dbReference>
<dbReference type="GO" id="GO:1904047">
    <property type="term" value="F:S-adenosyl-L-methionine binding"/>
    <property type="evidence" value="ECO:0007669"/>
    <property type="project" value="UniProtKB-UniRule"/>
</dbReference>
<dbReference type="GO" id="GO:0006777">
    <property type="term" value="P:Mo-molybdopterin cofactor biosynthetic process"/>
    <property type="evidence" value="ECO:0000318"/>
    <property type="project" value="GO_Central"/>
</dbReference>
<dbReference type="CDD" id="cd01335">
    <property type="entry name" value="Radical_SAM"/>
    <property type="match status" value="1"/>
</dbReference>
<dbReference type="CDD" id="cd21117">
    <property type="entry name" value="Twitch_MoaA"/>
    <property type="match status" value="1"/>
</dbReference>
<dbReference type="Gene3D" id="3.20.20.70">
    <property type="entry name" value="Aldolase class I"/>
    <property type="match status" value="1"/>
</dbReference>
<dbReference type="HAMAP" id="MF_01225_B">
    <property type="entry name" value="MoaA_B"/>
    <property type="match status" value="1"/>
</dbReference>
<dbReference type="InterPro" id="IPR013785">
    <property type="entry name" value="Aldolase_TIM"/>
</dbReference>
<dbReference type="InterPro" id="IPR006638">
    <property type="entry name" value="Elp3/MiaA/NifB-like_rSAM"/>
</dbReference>
<dbReference type="InterPro" id="IPR013483">
    <property type="entry name" value="MoaA"/>
</dbReference>
<dbReference type="InterPro" id="IPR000385">
    <property type="entry name" value="MoaA_NifB_PqqE_Fe-S-bd_CS"/>
</dbReference>
<dbReference type="InterPro" id="IPR010505">
    <property type="entry name" value="MoaA_twitch"/>
</dbReference>
<dbReference type="InterPro" id="IPR050105">
    <property type="entry name" value="MoCo_biosynth_MoaA/MoaC"/>
</dbReference>
<dbReference type="InterPro" id="IPR007197">
    <property type="entry name" value="rSAM"/>
</dbReference>
<dbReference type="NCBIfam" id="TIGR02666">
    <property type="entry name" value="moaA"/>
    <property type="match status" value="1"/>
</dbReference>
<dbReference type="PANTHER" id="PTHR22960:SF0">
    <property type="entry name" value="MOLYBDENUM COFACTOR BIOSYNTHESIS PROTEIN 1"/>
    <property type="match status" value="1"/>
</dbReference>
<dbReference type="PANTHER" id="PTHR22960">
    <property type="entry name" value="MOLYBDOPTERIN COFACTOR SYNTHESIS PROTEIN A"/>
    <property type="match status" value="1"/>
</dbReference>
<dbReference type="Pfam" id="PF13353">
    <property type="entry name" value="Fer4_12"/>
    <property type="match status" value="1"/>
</dbReference>
<dbReference type="Pfam" id="PF06463">
    <property type="entry name" value="Mob_synth_C"/>
    <property type="match status" value="1"/>
</dbReference>
<dbReference type="Pfam" id="PF04055">
    <property type="entry name" value="Radical_SAM"/>
    <property type="match status" value="1"/>
</dbReference>
<dbReference type="SFLD" id="SFLDG01383">
    <property type="entry name" value="cyclic_pyranopterin_phosphate"/>
    <property type="match status" value="1"/>
</dbReference>
<dbReference type="SFLD" id="SFLDG01386">
    <property type="entry name" value="main_SPASM_domain-containing"/>
    <property type="match status" value="1"/>
</dbReference>
<dbReference type="SMART" id="SM00729">
    <property type="entry name" value="Elp3"/>
    <property type="match status" value="1"/>
</dbReference>
<dbReference type="SUPFAM" id="SSF102114">
    <property type="entry name" value="Radical SAM enzymes"/>
    <property type="match status" value="1"/>
</dbReference>
<dbReference type="PROSITE" id="PS01305">
    <property type="entry name" value="MOAA_NIFB_PQQE"/>
    <property type="match status" value="1"/>
</dbReference>
<dbReference type="PROSITE" id="PS51918">
    <property type="entry name" value="RADICAL_SAM"/>
    <property type="match status" value="1"/>
</dbReference>
<protein>
    <recommendedName>
        <fullName evidence="1">GTP 3',8-cyclase</fullName>
        <ecNumber evidence="1">4.1.99.22</ecNumber>
    </recommendedName>
    <alternativeName>
        <fullName evidence="1">Molybdenum cofactor biosynthesis protein A</fullName>
    </alternativeName>
</protein>
<sequence>MELIDSFGRRINYLRLSVTDRCNLRCSYCMPAEGVEKLAHGDILSYEDLFRIARAAVAIGIEKIRITGGEPLVRKGIVPFLARIAAIEGLRQLVLTTNGLLLPEMAADLRSAGVQRLNISLDSLRADTFRAITRIGELQRVLDGIAAADAAGFPPPKINMVVMRGVNDGEVADFARLTIDRPCTVRFIEYMPATRENNWQSLTVPGREILDRISASYELEPVEKGACAGPSRDFRIRGAAGTLGVITAVSGHFCGDCNRVRVTSTGMAKSCLFSDEGFDLRPFLETSDPIILQEALRRIVGVKPERHGMSACKAEHQAFSMAKIGG</sequence>
<accession>Q747W9</accession>
<keyword id="KW-0004">4Fe-4S</keyword>
<keyword id="KW-0342">GTP-binding</keyword>
<keyword id="KW-0408">Iron</keyword>
<keyword id="KW-0411">Iron-sulfur</keyword>
<keyword id="KW-0456">Lyase</keyword>
<keyword id="KW-0479">Metal-binding</keyword>
<keyword id="KW-0501">Molybdenum cofactor biosynthesis</keyword>
<keyword id="KW-0547">Nucleotide-binding</keyword>
<keyword id="KW-1185">Reference proteome</keyword>
<keyword id="KW-0949">S-adenosyl-L-methionine</keyword>
<name>MOAA_GEOSL</name>
<comment type="function">
    <text evidence="1">Catalyzes the cyclization of GTP to (8S)-3',8-cyclo-7,8-dihydroguanosine 5'-triphosphate.</text>
</comment>
<comment type="catalytic activity">
    <reaction evidence="1">
        <text>GTP + AH2 + S-adenosyl-L-methionine = (8S)-3',8-cyclo-7,8-dihydroguanosine 5'-triphosphate + 5'-deoxyadenosine + L-methionine + A + H(+)</text>
        <dbReference type="Rhea" id="RHEA:49576"/>
        <dbReference type="ChEBI" id="CHEBI:13193"/>
        <dbReference type="ChEBI" id="CHEBI:15378"/>
        <dbReference type="ChEBI" id="CHEBI:17319"/>
        <dbReference type="ChEBI" id="CHEBI:17499"/>
        <dbReference type="ChEBI" id="CHEBI:37565"/>
        <dbReference type="ChEBI" id="CHEBI:57844"/>
        <dbReference type="ChEBI" id="CHEBI:59789"/>
        <dbReference type="ChEBI" id="CHEBI:131766"/>
        <dbReference type="EC" id="4.1.99.22"/>
    </reaction>
</comment>
<comment type="cofactor">
    <cofactor evidence="1">
        <name>[4Fe-4S] cluster</name>
        <dbReference type="ChEBI" id="CHEBI:49883"/>
    </cofactor>
    <text evidence="1">Binds 2 [4Fe-4S] clusters. Binds 1 [4Fe-4S] cluster coordinated with 3 cysteines and an exchangeable S-adenosyl-L-methionine and 1 [4Fe-4S] cluster coordinated with 3 cysteines and the GTP-derived substrate.</text>
</comment>
<comment type="pathway">
    <text evidence="1">Cofactor biosynthesis; molybdopterin biosynthesis.</text>
</comment>
<comment type="subunit">
    <text evidence="1">Monomer and homodimer.</text>
</comment>
<comment type="similarity">
    <text evidence="1">Belongs to the radical SAM superfamily. MoaA family.</text>
</comment>
<proteinExistence type="inferred from homology"/>
<organism>
    <name type="scientific">Geobacter sulfurreducens (strain ATCC 51573 / DSM 12127 / PCA)</name>
    <dbReference type="NCBI Taxonomy" id="243231"/>
    <lineage>
        <taxon>Bacteria</taxon>
        <taxon>Pseudomonadati</taxon>
        <taxon>Thermodesulfobacteriota</taxon>
        <taxon>Desulfuromonadia</taxon>
        <taxon>Geobacterales</taxon>
        <taxon>Geobacteraceae</taxon>
        <taxon>Geobacter</taxon>
    </lineage>
</organism>
<gene>
    <name evidence="1" type="primary">moaA</name>
    <name type="ordered locus">GSU3146</name>
</gene>
<evidence type="ECO:0000255" key="1">
    <source>
        <dbReference type="HAMAP-Rule" id="MF_01225"/>
    </source>
</evidence>
<evidence type="ECO:0000255" key="2">
    <source>
        <dbReference type="PROSITE-ProRule" id="PRU01266"/>
    </source>
</evidence>
<feature type="chain" id="PRO_0000152963" description="GTP 3',8-cyclase">
    <location>
        <begin position="1"/>
        <end position="326"/>
    </location>
</feature>
<feature type="domain" description="Radical SAM core" evidence="2">
    <location>
        <begin position="6"/>
        <end position="220"/>
    </location>
</feature>
<feature type="binding site" evidence="1">
    <location>
        <position position="15"/>
    </location>
    <ligand>
        <name>GTP</name>
        <dbReference type="ChEBI" id="CHEBI:37565"/>
    </ligand>
</feature>
<feature type="binding site" evidence="1">
    <location>
        <position position="22"/>
    </location>
    <ligand>
        <name>[4Fe-4S] cluster</name>
        <dbReference type="ChEBI" id="CHEBI:49883"/>
        <label>1</label>
        <note>4Fe-4S-S-AdoMet</note>
    </ligand>
</feature>
<feature type="binding site" evidence="1">
    <location>
        <position position="26"/>
    </location>
    <ligand>
        <name>[4Fe-4S] cluster</name>
        <dbReference type="ChEBI" id="CHEBI:49883"/>
        <label>1</label>
        <note>4Fe-4S-S-AdoMet</note>
    </ligand>
</feature>
<feature type="binding site" evidence="1">
    <location>
        <position position="28"/>
    </location>
    <ligand>
        <name>S-adenosyl-L-methionine</name>
        <dbReference type="ChEBI" id="CHEBI:59789"/>
    </ligand>
</feature>
<feature type="binding site" evidence="1">
    <location>
        <position position="29"/>
    </location>
    <ligand>
        <name>[4Fe-4S] cluster</name>
        <dbReference type="ChEBI" id="CHEBI:49883"/>
        <label>1</label>
        <note>4Fe-4S-S-AdoMet</note>
    </ligand>
</feature>
<feature type="binding site" evidence="1">
    <location>
        <position position="65"/>
    </location>
    <ligand>
        <name>GTP</name>
        <dbReference type="ChEBI" id="CHEBI:37565"/>
    </ligand>
</feature>
<feature type="binding site" evidence="1">
    <location>
        <position position="69"/>
    </location>
    <ligand>
        <name>S-adenosyl-L-methionine</name>
        <dbReference type="ChEBI" id="CHEBI:59789"/>
    </ligand>
</feature>
<feature type="binding site" evidence="1">
    <location>
        <position position="96"/>
    </location>
    <ligand>
        <name>GTP</name>
        <dbReference type="ChEBI" id="CHEBI:37565"/>
    </ligand>
</feature>
<feature type="binding site" evidence="1">
    <location>
        <position position="120"/>
    </location>
    <ligand>
        <name>S-adenosyl-L-methionine</name>
        <dbReference type="ChEBI" id="CHEBI:59789"/>
    </ligand>
</feature>
<feature type="binding site" evidence="1">
    <location>
        <position position="157"/>
    </location>
    <ligand>
        <name>GTP</name>
        <dbReference type="ChEBI" id="CHEBI:37565"/>
    </ligand>
</feature>
<feature type="binding site" evidence="1">
    <location>
        <position position="191"/>
    </location>
    <ligand>
        <name>S-adenosyl-L-methionine</name>
        <dbReference type="ChEBI" id="CHEBI:59789"/>
    </ligand>
</feature>
<feature type="binding site" evidence="1">
    <location>
        <position position="254"/>
    </location>
    <ligand>
        <name>[4Fe-4S] cluster</name>
        <dbReference type="ChEBI" id="CHEBI:49883"/>
        <label>2</label>
        <note>4Fe-4S-substrate</note>
    </ligand>
</feature>
<feature type="binding site" evidence="1">
    <location>
        <position position="257"/>
    </location>
    <ligand>
        <name>[4Fe-4S] cluster</name>
        <dbReference type="ChEBI" id="CHEBI:49883"/>
        <label>2</label>
        <note>4Fe-4S-substrate</note>
    </ligand>
</feature>
<feature type="binding site" evidence="1">
    <location>
        <begin position="259"/>
        <end position="261"/>
    </location>
    <ligand>
        <name>GTP</name>
        <dbReference type="ChEBI" id="CHEBI:37565"/>
    </ligand>
</feature>
<feature type="binding site" evidence="1">
    <location>
        <position position="271"/>
    </location>
    <ligand>
        <name>[4Fe-4S] cluster</name>
        <dbReference type="ChEBI" id="CHEBI:49883"/>
        <label>2</label>
        <note>4Fe-4S-substrate</note>
    </ligand>
</feature>